<dbReference type="EMBL" id="JQFZ01000049">
    <property type="protein sequence ID" value="KGO61233.1"/>
    <property type="molecule type" value="Genomic_DNA"/>
</dbReference>
<dbReference type="RefSeq" id="XP_016602116.1">
    <property type="nucleotide sequence ID" value="XM_016745357.1"/>
</dbReference>
<dbReference type="GeneID" id="27680777"/>
<dbReference type="VEuPathDB" id="FungiDB:PEXP_032470"/>
<dbReference type="HOGENOM" id="CLU_927825_0_0_1"/>
<dbReference type="Proteomes" id="UP000030143">
    <property type="component" value="Unassembled WGS sequence"/>
</dbReference>
<dbReference type="GO" id="GO:0008061">
    <property type="term" value="F:chitin binding"/>
    <property type="evidence" value="ECO:0007669"/>
    <property type="project" value="UniProtKB-KW"/>
</dbReference>
<dbReference type="CDD" id="cd00118">
    <property type="entry name" value="LysM"/>
    <property type="match status" value="1"/>
</dbReference>
<dbReference type="Gene3D" id="3.10.350.10">
    <property type="entry name" value="LysM domain"/>
    <property type="match status" value="1"/>
</dbReference>
<dbReference type="InterPro" id="IPR052210">
    <property type="entry name" value="LysM1-like"/>
</dbReference>
<dbReference type="InterPro" id="IPR018392">
    <property type="entry name" value="LysM_dom"/>
</dbReference>
<dbReference type="InterPro" id="IPR036779">
    <property type="entry name" value="LysM_dom_sf"/>
</dbReference>
<dbReference type="PANTHER" id="PTHR34997">
    <property type="entry name" value="AM15"/>
    <property type="match status" value="1"/>
</dbReference>
<dbReference type="PANTHER" id="PTHR34997:SF1">
    <property type="entry name" value="PEPTIDOGLYCAN-BINDING LYSIN DOMAIN"/>
    <property type="match status" value="1"/>
</dbReference>
<dbReference type="Pfam" id="PF01476">
    <property type="entry name" value="LysM"/>
    <property type="match status" value="1"/>
</dbReference>
<dbReference type="SMART" id="SM00257">
    <property type="entry name" value="LysM"/>
    <property type="match status" value="1"/>
</dbReference>
<dbReference type="SUPFAM" id="SSF54106">
    <property type="entry name" value="LysM domain"/>
    <property type="match status" value="1"/>
</dbReference>
<dbReference type="PROSITE" id="PS51782">
    <property type="entry name" value="LYSM"/>
    <property type="match status" value="1"/>
</dbReference>
<gene>
    <name evidence="3" type="primary">LysM16</name>
    <name type="ORF">PEX2_080870</name>
</gene>
<feature type="chain" id="PRO_0000460668" description="Non-secreted LysM effector LysM16">
    <location>
        <begin position="1"/>
        <end position="300"/>
    </location>
</feature>
<feature type="domain" description="LysM" evidence="1">
    <location>
        <begin position="176"/>
        <end position="222"/>
    </location>
</feature>
<evidence type="ECO:0000255" key="1">
    <source>
        <dbReference type="PROSITE-ProRule" id="PRU01118"/>
    </source>
</evidence>
<evidence type="ECO:0000269" key="2">
    <source>
    </source>
</evidence>
<evidence type="ECO:0000303" key="3">
    <source>
    </source>
</evidence>
<evidence type="ECO:0000305" key="4"/>
<evidence type="ECO:0000305" key="5">
    <source>
    </source>
</evidence>
<sequence>MTFTEYMGFFQDKYELICMADEERDNFCLDVESSWNITNMVLLDEATWPTYTNKCYYDVSGITEQVWINMRLNINIIPANNYTASENINITIASPGPITTICPQAITISQNTTLTCQQMAIAYEIPTAGIRNLKIISIAIGVAAVNGTNPTTSNTTATFVSAPTTTVTGTTSECCEWHTVFSGDTCQLIEAEYGITLEKFIALNTYVNSTCGNIWPDYAYCVSGIATANSSTSTTAITATSTSPPIPVTTSGTLTTATTSGTITTPAPAQTGMVSGCTTFYEAISGDGLLRDRHIVRHHA</sequence>
<comment type="function">
    <text evidence="5">Non-secreted LysM effector that might be involved in manipulation of host defenses for successful infection.</text>
</comment>
<comment type="domain">
    <text evidence="5">The LysM (lysin motif) domains are small globular domains involved in binding chitin in eukaryotes. LysM1 contains one LysM domain.</text>
</comment>
<comment type="disruption phenotype">
    <text evidence="2">Leads to enhanced fungal virulence, with faster decaying on infected fruits.</text>
</comment>
<comment type="miscellaneous">
    <text evidence="4">In plants, chitin acts as a microbe-associated molecular pattern (MAMP) that is recognized by lysin motif (LysM)-containing plant cell surface-localized pattern recognition receptors (PRRs) that activate a plethora of downstream immune responses.</text>
</comment>
<comment type="similarity">
    <text evidence="4">Belongs to the secreted LysM effector family.</text>
</comment>
<protein>
    <recommendedName>
        <fullName evidence="3">Non-secreted LysM effector LysM16</fullName>
    </recommendedName>
    <alternativeName>
        <fullName evidence="3">LysM domain-containing protein 16</fullName>
    </alternativeName>
</protein>
<reference key="1">
    <citation type="journal article" date="2015" name="Mol. Plant Microbe Interact.">
        <title>Genome, transcriptome, and functional analyses of Penicillium expansum provide new insights into secondary metabolism and pathogenicity.</title>
        <authorList>
            <person name="Ballester A.R."/>
            <person name="Marcet-Houben M."/>
            <person name="Levin E."/>
            <person name="Sela N."/>
            <person name="Selma-Lazaro C."/>
            <person name="Carmona L."/>
            <person name="Wisniewski M."/>
            <person name="Droby S."/>
            <person name="Gonzalez-Candelas L."/>
            <person name="Gabaldon T."/>
        </authorList>
    </citation>
    <scope>NUCLEOTIDE SEQUENCE [LARGE SCALE GENOMIC DNA]</scope>
    <source>
        <strain>MD-8</strain>
    </source>
</reference>
<reference key="2">
    <citation type="journal article" date="2020" name="Mol. Genet. Genomics">
        <title>Multiple transcriptomic analyses and characterization of pathogen-related core effectors and LysM family members reveal their differential roles in fungal growth and pathogenicity in Penicillium expansum.</title>
        <authorList>
            <person name="Chen D."/>
            <person name="Li G."/>
            <person name="Liu J."/>
            <person name="Wisniewski M."/>
            <person name="Droby S."/>
            <person name="Levin E."/>
            <person name="Huang S."/>
            <person name="Liu Y."/>
        </authorList>
    </citation>
    <scope>FUNCTION</scope>
    <scope>DISRUPTION PHENOTYPE</scope>
    <scope>DOMAIN</scope>
</reference>
<organism>
    <name type="scientific">Penicillium expansum</name>
    <name type="common">Blue mold rot fungus</name>
    <dbReference type="NCBI Taxonomy" id="27334"/>
    <lineage>
        <taxon>Eukaryota</taxon>
        <taxon>Fungi</taxon>
        <taxon>Dikarya</taxon>
        <taxon>Ascomycota</taxon>
        <taxon>Pezizomycotina</taxon>
        <taxon>Eurotiomycetes</taxon>
        <taxon>Eurotiomycetidae</taxon>
        <taxon>Eurotiales</taxon>
        <taxon>Aspergillaceae</taxon>
        <taxon>Penicillium</taxon>
    </lineage>
</organism>
<accession>A0A0A2K2W7</accession>
<proteinExistence type="inferred from homology"/>
<name>LYS16_PENEN</name>
<keyword id="KW-0147">Chitin-binding</keyword>
<keyword id="KW-1185">Reference proteome</keyword>
<keyword id="KW-0843">Virulence</keyword>